<reference key="1">
    <citation type="submission" date="2007-06" db="EMBL/GenBank/DDBJ databases">
        <title>Complete sequence of Methanococcus aeolicus Nankai-3.</title>
        <authorList>
            <consortium name="US DOE Joint Genome Institute"/>
            <person name="Copeland A."/>
            <person name="Lucas S."/>
            <person name="Lapidus A."/>
            <person name="Barry K."/>
            <person name="Glavina del Rio T."/>
            <person name="Dalin E."/>
            <person name="Tice H."/>
            <person name="Pitluck S."/>
            <person name="Chain P."/>
            <person name="Malfatti S."/>
            <person name="Shin M."/>
            <person name="Vergez L."/>
            <person name="Schmutz J."/>
            <person name="Larimer F."/>
            <person name="Land M."/>
            <person name="Hauser L."/>
            <person name="Kyrpides N."/>
            <person name="Lykidis A."/>
            <person name="Sieprawska-Lupa M."/>
            <person name="Whitman W.B."/>
            <person name="Richardson P."/>
        </authorList>
    </citation>
    <scope>NUCLEOTIDE SEQUENCE [LARGE SCALE GENOMIC DNA]</scope>
    <source>
        <strain>ATCC BAA-1280 / DSM 17508 / OCM 812 / Nankai-3</strain>
    </source>
</reference>
<keyword id="KW-0067">ATP-binding</keyword>
<keyword id="KW-0460">Magnesium</keyword>
<keyword id="KW-0547">Nucleotide-binding</keyword>
<keyword id="KW-0554">One-carbon metabolism</keyword>
<keyword id="KW-0808">Transferase</keyword>
<comment type="function">
    <text evidence="1">Catalyzes the formation of S-adenosylmethionine from methionine and ATP.</text>
</comment>
<comment type="catalytic activity">
    <reaction evidence="1">
        <text>L-methionine + ATP + H2O = S-adenosyl-L-methionine + phosphate + diphosphate</text>
        <dbReference type="Rhea" id="RHEA:21080"/>
        <dbReference type="ChEBI" id="CHEBI:15377"/>
        <dbReference type="ChEBI" id="CHEBI:30616"/>
        <dbReference type="ChEBI" id="CHEBI:33019"/>
        <dbReference type="ChEBI" id="CHEBI:43474"/>
        <dbReference type="ChEBI" id="CHEBI:57844"/>
        <dbReference type="ChEBI" id="CHEBI:59789"/>
        <dbReference type="EC" id="2.5.1.6"/>
    </reaction>
</comment>
<comment type="cofactor">
    <cofactor evidence="1">
        <name>Mg(2+)</name>
        <dbReference type="ChEBI" id="CHEBI:18420"/>
    </cofactor>
</comment>
<comment type="pathway">
    <text evidence="1">Amino-acid biosynthesis; S-adenosyl-L-methionine biosynthesis; S-adenosyl-L-methionine from L-methionine: step 1/1.</text>
</comment>
<comment type="similarity">
    <text evidence="1">Belongs to the AdoMet synthase 2 family.</text>
</comment>
<evidence type="ECO:0000255" key="1">
    <source>
        <dbReference type="HAMAP-Rule" id="MF_00136"/>
    </source>
</evidence>
<accession>A6UU75</accession>
<gene>
    <name evidence="1" type="primary">mat</name>
    <name type="ordered locus">Maeo_0461</name>
</gene>
<proteinExistence type="inferred from homology"/>
<protein>
    <recommendedName>
        <fullName evidence="1">S-adenosylmethionine synthase</fullName>
        <shortName evidence="1">AdoMet synthase</shortName>
        <ecNumber evidence="1">2.5.1.6</ecNumber>
    </recommendedName>
    <alternativeName>
        <fullName evidence="1">Methionine adenosyltransferase</fullName>
    </alternativeName>
</protein>
<dbReference type="EC" id="2.5.1.6" evidence="1"/>
<dbReference type="EMBL" id="CP000743">
    <property type="protein sequence ID" value="ABR56047.1"/>
    <property type="molecule type" value="Genomic_DNA"/>
</dbReference>
<dbReference type="RefSeq" id="WP_011973179.1">
    <property type="nucleotide sequence ID" value="NC_009635.1"/>
</dbReference>
<dbReference type="SMR" id="A6UU75"/>
<dbReference type="STRING" id="419665.Maeo_0461"/>
<dbReference type="GeneID" id="5327100"/>
<dbReference type="KEGG" id="mae:Maeo_0461"/>
<dbReference type="eggNOG" id="arCOG01678">
    <property type="taxonomic scope" value="Archaea"/>
</dbReference>
<dbReference type="HOGENOM" id="CLU_057642_0_0_2"/>
<dbReference type="OrthoDB" id="204488at2157"/>
<dbReference type="UniPathway" id="UPA00315">
    <property type="reaction ID" value="UER00080"/>
</dbReference>
<dbReference type="Proteomes" id="UP000001106">
    <property type="component" value="Chromosome"/>
</dbReference>
<dbReference type="GO" id="GO:0005524">
    <property type="term" value="F:ATP binding"/>
    <property type="evidence" value="ECO:0007669"/>
    <property type="project" value="UniProtKB-UniRule"/>
</dbReference>
<dbReference type="GO" id="GO:0000287">
    <property type="term" value="F:magnesium ion binding"/>
    <property type="evidence" value="ECO:0007669"/>
    <property type="project" value="UniProtKB-UniRule"/>
</dbReference>
<dbReference type="GO" id="GO:0004478">
    <property type="term" value="F:methionine adenosyltransferase activity"/>
    <property type="evidence" value="ECO:0007669"/>
    <property type="project" value="UniProtKB-UniRule"/>
</dbReference>
<dbReference type="GO" id="GO:0006730">
    <property type="term" value="P:one-carbon metabolic process"/>
    <property type="evidence" value="ECO:0007669"/>
    <property type="project" value="UniProtKB-KW"/>
</dbReference>
<dbReference type="GO" id="GO:0006556">
    <property type="term" value="P:S-adenosylmethionine biosynthetic process"/>
    <property type="evidence" value="ECO:0007669"/>
    <property type="project" value="UniProtKB-UniRule"/>
</dbReference>
<dbReference type="Gene3D" id="3.30.300.10">
    <property type="match status" value="1"/>
</dbReference>
<dbReference type="Gene3D" id="3.30.300.280">
    <property type="entry name" value="S-adenosylmethionine synthetase, C-terminal domain"/>
    <property type="match status" value="2"/>
</dbReference>
<dbReference type="HAMAP" id="MF_00136">
    <property type="entry name" value="S_AdoMet_synth2"/>
    <property type="match status" value="1"/>
</dbReference>
<dbReference type="InterPro" id="IPR027790">
    <property type="entry name" value="AdoMet_synthase_2_family"/>
</dbReference>
<dbReference type="InterPro" id="IPR042544">
    <property type="entry name" value="AdoMet_synthase_3"/>
</dbReference>
<dbReference type="InterPro" id="IPR002795">
    <property type="entry name" value="S-AdoMet_synthetase_arc"/>
</dbReference>
<dbReference type="NCBIfam" id="NF003364">
    <property type="entry name" value="PRK04439.1-3"/>
    <property type="match status" value="1"/>
</dbReference>
<dbReference type="NCBIfam" id="NF003366">
    <property type="entry name" value="PRK04439.1-5"/>
    <property type="match status" value="1"/>
</dbReference>
<dbReference type="PANTHER" id="PTHR36697">
    <property type="entry name" value="S-ADENOSYLMETHIONINE SYNTHASE"/>
    <property type="match status" value="1"/>
</dbReference>
<dbReference type="PANTHER" id="PTHR36697:SF1">
    <property type="entry name" value="S-ADENOSYLMETHIONINE SYNTHASE"/>
    <property type="match status" value="1"/>
</dbReference>
<dbReference type="Pfam" id="PF01941">
    <property type="entry name" value="AdoMet_Synthase"/>
    <property type="match status" value="1"/>
</dbReference>
<sequence length="403" mass="44027">MANIVVKKLNSTPIEELPVEIVERKGIGHPDSICDGIAEAVSVALCKMYKEKMGAVLHHNTDQVELVGGYAYPSLGGGDIVNPIYVLLSGRATTEVFDKEKCETIRLPVGTVAVNAAREYIKNTIINLDVEKDIVVDCRIGQGSVDLVGVFDRENSIPLANDTSFGVGHAPFSTTENLVLKTEQLLNSKEIKKEIPAIGEDIKVMGLREGKKITLTIAMATVDKYVNSVEEYEEIKAKAKAKVEELAKEYADGYEIEVFVNTADSDNCIFLTVSGTSAEMGDDGSVGRGNRANGLITPFRPMSMEATSGKNPINHIGKLYNILANIIANDVAKIEGVNECHVRILSQIGKPVNEPKILDIELITDEGYDVADIEPKANEIAEYWLNNIEEVREKLMTGEIKTF</sequence>
<name>METK_META3</name>
<organism>
    <name type="scientific">Methanococcus aeolicus (strain ATCC BAA-1280 / DSM 17508 / OCM 812 / Nankai-3)</name>
    <dbReference type="NCBI Taxonomy" id="419665"/>
    <lineage>
        <taxon>Archaea</taxon>
        <taxon>Methanobacteriati</taxon>
        <taxon>Methanobacteriota</taxon>
        <taxon>Methanomada group</taxon>
        <taxon>Methanococci</taxon>
        <taxon>Methanococcales</taxon>
        <taxon>Methanococcaceae</taxon>
        <taxon>Methanococcus</taxon>
    </lineage>
</organism>
<feature type="chain" id="PRO_1000018653" description="S-adenosylmethionine synthase">
    <location>
        <begin position="1"/>
        <end position="403"/>
    </location>
</feature>
<feature type="binding site" evidence="1">
    <location>
        <begin position="141"/>
        <end position="146"/>
    </location>
    <ligand>
        <name>ATP</name>
        <dbReference type="ChEBI" id="CHEBI:30616"/>
    </ligand>
</feature>